<sequence length="75" mass="8361">MSSGGLLLLLGLLTLWAELTPVSGQDRPVKPGLCPPRPQKPPCVKECKNDWSCRGEQKCCHYGCIYECRDPIFVK</sequence>
<reference key="1">
    <citation type="journal article" date="2008" name="Cell. Mol. Life Sci.">
        <title>Common evolution of waprin and Kunitz-like toxin families in Australian venomous snakes.</title>
        <authorList>
            <person name="St Pierre L."/>
            <person name="Earl S.T."/>
            <person name="Filippovich I."/>
            <person name="Sorokina N."/>
            <person name="Masci P.P."/>
            <person name="De Jersey J."/>
            <person name="Lavin M.F."/>
        </authorList>
    </citation>
    <scope>NUCLEOTIDE SEQUENCE [GENOMIC DNA]</scope>
    <source>
        <tissue>Venom gland</tissue>
    </source>
</reference>
<proteinExistence type="inferred from homology"/>
<feature type="signal peptide" evidence="2">
    <location>
        <begin position="1"/>
        <end position="24"/>
    </location>
</feature>
<feature type="chain" id="PRO_5000395620" description="Porwaprin-b">
    <location>
        <begin position="25"/>
        <end position="75"/>
    </location>
</feature>
<feature type="domain" description="WAP" evidence="3">
    <location>
        <begin position="27"/>
        <end position="72"/>
    </location>
</feature>
<feature type="disulfide bond" evidence="3">
    <location>
        <begin position="34"/>
        <end position="60"/>
    </location>
</feature>
<feature type="disulfide bond" evidence="3">
    <location>
        <begin position="43"/>
        <end position="64"/>
    </location>
</feature>
<feature type="disulfide bond" evidence="3">
    <location>
        <begin position="47"/>
        <end position="59"/>
    </location>
</feature>
<feature type="disulfide bond" evidence="3">
    <location>
        <begin position="53"/>
        <end position="68"/>
    </location>
</feature>
<name>WAPB_PSEPO</name>
<evidence type="ECO:0000250" key="1">
    <source>
        <dbReference type="UniProtKB" id="P83952"/>
    </source>
</evidence>
<evidence type="ECO:0000255" key="2"/>
<evidence type="ECO:0000255" key="3">
    <source>
        <dbReference type="PROSITE-ProRule" id="PRU00722"/>
    </source>
</evidence>
<evidence type="ECO:0000303" key="4">
    <source>
    </source>
</evidence>
<evidence type="ECO:0000305" key="5"/>
<evidence type="ECO:0000305" key="6">
    <source>
    </source>
</evidence>
<organism>
    <name type="scientific">Pseudechis porphyriacus</name>
    <name type="common">Red-bellied black snake</name>
    <dbReference type="NCBI Taxonomy" id="8671"/>
    <lineage>
        <taxon>Eukaryota</taxon>
        <taxon>Metazoa</taxon>
        <taxon>Chordata</taxon>
        <taxon>Craniata</taxon>
        <taxon>Vertebrata</taxon>
        <taxon>Euteleostomi</taxon>
        <taxon>Lepidosauria</taxon>
        <taxon>Squamata</taxon>
        <taxon>Bifurcata</taxon>
        <taxon>Unidentata</taxon>
        <taxon>Episquamata</taxon>
        <taxon>Toxicofera</taxon>
        <taxon>Serpentes</taxon>
        <taxon>Colubroidea</taxon>
        <taxon>Elapidae</taxon>
        <taxon>Hydrophiinae</taxon>
        <taxon>Pseudechis</taxon>
    </lineage>
</organism>
<keyword id="KW-0044">Antibiotic</keyword>
<keyword id="KW-0929">Antimicrobial</keyword>
<keyword id="KW-1015">Disulfide bond</keyword>
<keyword id="KW-0964">Secreted</keyword>
<keyword id="KW-0732">Signal</keyword>
<dbReference type="EMBL" id="EU401820">
    <property type="protein sequence ID" value="ACC77769.1"/>
    <property type="molecule type" value="Genomic_DNA"/>
</dbReference>
<dbReference type="SMR" id="B5L5N2"/>
<dbReference type="GO" id="GO:0005576">
    <property type="term" value="C:extracellular region"/>
    <property type="evidence" value="ECO:0000250"/>
    <property type="project" value="UniProtKB"/>
</dbReference>
<dbReference type="GO" id="GO:0005615">
    <property type="term" value="C:extracellular space"/>
    <property type="evidence" value="ECO:0007669"/>
    <property type="project" value="TreeGrafter"/>
</dbReference>
<dbReference type="GO" id="GO:0004867">
    <property type="term" value="F:serine-type endopeptidase inhibitor activity"/>
    <property type="evidence" value="ECO:0007669"/>
    <property type="project" value="TreeGrafter"/>
</dbReference>
<dbReference type="GO" id="GO:0019731">
    <property type="term" value="P:antibacterial humoral response"/>
    <property type="evidence" value="ECO:0007669"/>
    <property type="project" value="TreeGrafter"/>
</dbReference>
<dbReference type="GO" id="GO:0045087">
    <property type="term" value="P:innate immune response"/>
    <property type="evidence" value="ECO:0007669"/>
    <property type="project" value="TreeGrafter"/>
</dbReference>
<dbReference type="GO" id="GO:0044278">
    <property type="term" value="P:venom-mediated disruption of cell wall in another organism"/>
    <property type="evidence" value="ECO:0000250"/>
    <property type="project" value="UniProtKB"/>
</dbReference>
<dbReference type="Gene3D" id="4.10.75.10">
    <property type="entry name" value="Elafin-like"/>
    <property type="match status" value="1"/>
</dbReference>
<dbReference type="InterPro" id="IPR036645">
    <property type="entry name" value="Elafin-like_sf"/>
</dbReference>
<dbReference type="InterPro" id="IPR008197">
    <property type="entry name" value="WAP_dom"/>
</dbReference>
<dbReference type="InterPro" id="IPR050514">
    <property type="entry name" value="WAP_four-disulfide_core"/>
</dbReference>
<dbReference type="PANTHER" id="PTHR19441:SF30">
    <property type="entry name" value="ELAFIN"/>
    <property type="match status" value="1"/>
</dbReference>
<dbReference type="PANTHER" id="PTHR19441">
    <property type="entry name" value="WHEY ACDIC PROTEIN WAP"/>
    <property type="match status" value="1"/>
</dbReference>
<dbReference type="Pfam" id="PF00095">
    <property type="entry name" value="WAP"/>
    <property type="match status" value="1"/>
</dbReference>
<dbReference type="PRINTS" id="PR00003">
    <property type="entry name" value="4DISULPHCORE"/>
</dbReference>
<dbReference type="SMART" id="SM00217">
    <property type="entry name" value="WAP"/>
    <property type="match status" value="1"/>
</dbReference>
<dbReference type="SUPFAM" id="SSF57256">
    <property type="entry name" value="Elafin-like"/>
    <property type="match status" value="1"/>
</dbReference>
<dbReference type="PROSITE" id="PS51390">
    <property type="entry name" value="WAP"/>
    <property type="match status" value="1"/>
</dbReference>
<accession>B5L5N2</accession>
<comment type="function">
    <text evidence="1">Damages membranes of susceptible bacteria. Has no hemolytic activity. Not toxic to mice. Does not inhibit the proteinases elastase and cathepsin G.</text>
</comment>
<comment type="subcellular location">
    <subcellularLocation>
        <location evidence="6">Secreted</location>
    </subcellularLocation>
</comment>
<comment type="tissue specificity">
    <text evidence="6">Expressed by the venom gland.</text>
</comment>
<comment type="similarity">
    <text evidence="5">Belongs to the venom waprin family.</text>
</comment>
<protein>
    <recommendedName>
        <fullName evidence="4">Porwaprin-b</fullName>
    </recommendedName>
</protein>